<dbReference type="EC" id="3.1.1.29" evidence="1"/>
<dbReference type="EMBL" id="AE010299">
    <property type="protein sequence ID" value="AAM06640.1"/>
    <property type="molecule type" value="Genomic_DNA"/>
</dbReference>
<dbReference type="RefSeq" id="WP_011023203.1">
    <property type="nucleotide sequence ID" value="NC_003552.1"/>
</dbReference>
<dbReference type="SMR" id="Q8TKX4"/>
<dbReference type="FunCoup" id="Q8TKX4">
    <property type="interactions" value="165"/>
</dbReference>
<dbReference type="STRING" id="188937.MA_3269"/>
<dbReference type="EnsemblBacteria" id="AAM06640">
    <property type="protein sequence ID" value="AAM06640"/>
    <property type="gene ID" value="MA_3269"/>
</dbReference>
<dbReference type="GeneID" id="1475162"/>
<dbReference type="KEGG" id="mac:MA_3269"/>
<dbReference type="HOGENOM" id="CLU_073661_2_2_2"/>
<dbReference type="InParanoid" id="Q8TKX4"/>
<dbReference type="OrthoDB" id="6075at2157"/>
<dbReference type="PhylomeDB" id="Q8TKX4"/>
<dbReference type="Proteomes" id="UP000002487">
    <property type="component" value="Chromosome"/>
</dbReference>
<dbReference type="GO" id="GO:0005829">
    <property type="term" value="C:cytosol"/>
    <property type="evidence" value="ECO:0000318"/>
    <property type="project" value="GO_Central"/>
</dbReference>
<dbReference type="GO" id="GO:0004045">
    <property type="term" value="F:peptidyl-tRNA hydrolase activity"/>
    <property type="evidence" value="ECO:0000318"/>
    <property type="project" value="GO_Central"/>
</dbReference>
<dbReference type="GO" id="GO:0006412">
    <property type="term" value="P:translation"/>
    <property type="evidence" value="ECO:0007669"/>
    <property type="project" value="UniProtKB-UniRule"/>
</dbReference>
<dbReference type="CDD" id="cd02430">
    <property type="entry name" value="PTH2"/>
    <property type="match status" value="1"/>
</dbReference>
<dbReference type="FunFam" id="3.40.1490.10:FF:000001">
    <property type="entry name" value="Peptidyl-tRNA hydrolase 2"/>
    <property type="match status" value="1"/>
</dbReference>
<dbReference type="Gene3D" id="3.40.1490.10">
    <property type="entry name" value="Bit1"/>
    <property type="match status" value="1"/>
</dbReference>
<dbReference type="HAMAP" id="MF_00628">
    <property type="entry name" value="Pept_tRNA_hydro_arch"/>
    <property type="match status" value="1"/>
</dbReference>
<dbReference type="InterPro" id="IPR023476">
    <property type="entry name" value="Pep_tRNA_hydro_II_dom_sf"/>
</dbReference>
<dbReference type="InterPro" id="IPR034759">
    <property type="entry name" value="Pept_tRNA_hydro_arch"/>
</dbReference>
<dbReference type="InterPro" id="IPR002833">
    <property type="entry name" value="PTH2"/>
</dbReference>
<dbReference type="NCBIfam" id="TIGR00283">
    <property type="entry name" value="arch_pth2"/>
    <property type="match status" value="1"/>
</dbReference>
<dbReference type="NCBIfam" id="NF003314">
    <property type="entry name" value="PRK04322.1"/>
    <property type="match status" value="1"/>
</dbReference>
<dbReference type="PANTHER" id="PTHR12649">
    <property type="entry name" value="PEPTIDYL-TRNA HYDROLASE 2"/>
    <property type="match status" value="1"/>
</dbReference>
<dbReference type="PANTHER" id="PTHR12649:SF11">
    <property type="entry name" value="PEPTIDYL-TRNA HYDROLASE 2, MITOCHONDRIAL"/>
    <property type="match status" value="1"/>
</dbReference>
<dbReference type="Pfam" id="PF01981">
    <property type="entry name" value="PTH2"/>
    <property type="match status" value="1"/>
</dbReference>
<dbReference type="SUPFAM" id="SSF102462">
    <property type="entry name" value="Peptidyl-tRNA hydrolase II"/>
    <property type="match status" value="1"/>
</dbReference>
<feature type="chain" id="PRO_0000120291" description="Peptidyl-tRNA hydrolase">
    <location>
        <begin position="1"/>
        <end position="115"/>
    </location>
</feature>
<gene>
    <name evidence="1" type="primary">pth</name>
    <name type="ordered locus">MA_3269</name>
</gene>
<protein>
    <recommendedName>
        <fullName evidence="1">Peptidyl-tRNA hydrolase</fullName>
        <shortName evidence="1">PTH</shortName>
        <ecNumber evidence="1">3.1.1.29</ecNumber>
    </recommendedName>
</protein>
<reference key="1">
    <citation type="journal article" date="2002" name="Genome Res.">
        <title>The genome of Methanosarcina acetivorans reveals extensive metabolic and physiological diversity.</title>
        <authorList>
            <person name="Galagan J.E."/>
            <person name="Nusbaum C."/>
            <person name="Roy A."/>
            <person name="Endrizzi M.G."/>
            <person name="Macdonald P."/>
            <person name="FitzHugh W."/>
            <person name="Calvo S."/>
            <person name="Engels R."/>
            <person name="Smirnov S."/>
            <person name="Atnoor D."/>
            <person name="Brown A."/>
            <person name="Allen N."/>
            <person name="Naylor J."/>
            <person name="Stange-Thomann N."/>
            <person name="DeArellano K."/>
            <person name="Johnson R."/>
            <person name="Linton L."/>
            <person name="McEwan P."/>
            <person name="McKernan K."/>
            <person name="Talamas J."/>
            <person name="Tirrell A."/>
            <person name="Ye W."/>
            <person name="Zimmer A."/>
            <person name="Barber R.D."/>
            <person name="Cann I."/>
            <person name="Graham D.E."/>
            <person name="Grahame D.A."/>
            <person name="Guss A.M."/>
            <person name="Hedderich R."/>
            <person name="Ingram-Smith C."/>
            <person name="Kuettner H.C."/>
            <person name="Krzycki J.A."/>
            <person name="Leigh J.A."/>
            <person name="Li W."/>
            <person name="Liu J."/>
            <person name="Mukhopadhyay B."/>
            <person name="Reeve J.N."/>
            <person name="Smith K."/>
            <person name="Springer T.A."/>
            <person name="Umayam L.A."/>
            <person name="White O."/>
            <person name="White R.H."/>
            <person name="de Macario E.C."/>
            <person name="Ferry J.G."/>
            <person name="Jarrell K.F."/>
            <person name="Jing H."/>
            <person name="Macario A.J.L."/>
            <person name="Paulsen I.T."/>
            <person name="Pritchett M."/>
            <person name="Sowers K.R."/>
            <person name="Swanson R.V."/>
            <person name="Zinder S.H."/>
            <person name="Lander E."/>
            <person name="Metcalf W.W."/>
            <person name="Birren B."/>
        </authorList>
    </citation>
    <scope>NUCLEOTIDE SEQUENCE [LARGE SCALE GENOMIC DNA]</scope>
    <source>
        <strain>ATCC 35395 / DSM 2834 / JCM 12185 / C2A</strain>
    </source>
</reference>
<accession>Q8TKX4</accession>
<evidence type="ECO:0000255" key="1">
    <source>
        <dbReference type="HAMAP-Rule" id="MF_00628"/>
    </source>
</evidence>
<comment type="function">
    <text evidence="1">The natural substrate for this enzyme may be peptidyl-tRNAs which drop off the ribosome during protein synthesis.</text>
</comment>
<comment type="catalytic activity">
    <reaction evidence="1">
        <text>an N-acyl-L-alpha-aminoacyl-tRNA + H2O = an N-acyl-L-amino acid + a tRNA + H(+)</text>
        <dbReference type="Rhea" id="RHEA:54448"/>
        <dbReference type="Rhea" id="RHEA-COMP:10123"/>
        <dbReference type="Rhea" id="RHEA-COMP:13883"/>
        <dbReference type="ChEBI" id="CHEBI:15377"/>
        <dbReference type="ChEBI" id="CHEBI:15378"/>
        <dbReference type="ChEBI" id="CHEBI:59874"/>
        <dbReference type="ChEBI" id="CHEBI:78442"/>
        <dbReference type="ChEBI" id="CHEBI:138191"/>
        <dbReference type="EC" id="3.1.1.29"/>
    </reaction>
</comment>
<comment type="subcellular location">
    <subcellularLocation>
        <location evidence="1">Cytoplasm</location>
    </subcellularLocation>
</comment>
<comment type="similarity">
    <text evidence="1">Belongs to the PTH2 family.</text>
</comment>
<sequence length="115" mass="12644">MSEYKQCIVTRDDLKLSKGKFAVQVAHAALSAAEWASKSDLEKWKEGGQKKIVLRVPTIKDLYELKEKARREGLPTALIQDAGLTEIPAGTVTVLGIGPAKEEVIDKVTRDLKLV</sequence>
<keyword id="KW-0963">Cytoplasm</keyword>
<keyword id="KW-0378">Hydrolase</keyword>
<keyword id="KW-1185">Reference proteome</keyword>
<organism>
    <name type="scientific">Methanosarcina acetivorans (strain ATCC 35395 / DSM 2834 / JCM 12185 / C2A)</name>
    <dbReference type="NCBI Taxonomy" id="188937"/>
    <lineage>
        <taxon>Archaea</taxon>
        <taxon>Methanobacteriati</taxon>
        <taxon>Methanobacteriota</taxon>
        <taxon>Stenosarchaea group</taxon>
        <taxon>Methanomicrobia</taxon>
        <taxon>Methanosarcinales</taxon>
        <taxon>Methanosarcinaceae</taxon>
        <taxon>Methanosarcina</taxon>
    </lineage>
</organism>
<proteinExistence type="inferred from homology"/>
<name>PTH_METAC</name>